<evidence type="ECO:0000250" key="1"/>
<evidence type="ECO:0000255" key="2"/>
<evidence type="ECO:0000305" key="3"/>
<dbReference type="EMBL" id="AF311720">
    <property type="protein sequence ID" value="AAG48610.1"/>
    <property type="molecule type" value="mRNA"/>
</dbReference>
<dbReference type="SMR" id="Q9FPP4"/>
<dbReference type="GO" id="GO:0009535">
    <property type="term" value="C:chloroplast thylakoid membrane"/>
    <property type="evidence" value="ECO:0007669"/>
    <property type="project" value="UniProtKB-SubCell"/>
</dbReference>
<dbReference type="GO" id="GO:0009523">
    <property type="term" value="C:photosystem II"/>
    <property type="evidence" value="ECO:0007669"/>
    <property type="project" value="UniProtKB-KW"/>
</dbReference>
<dbReference type="GO" id="GO:0015979">
    <property type="term" value="P:photosynthesis"/>
    <property type="evidence" value="ECO:0007669"/>
    <property type="project" value="UniProtKB-KW"/>
</dbReference>
<dbReference type="FunFam" id="1.10.3460.10:FF:000008">
    <property type="entry name" value="Photosystem II 22 kDa protein, chloroplastic"/>
    <property type="match status" value="2"/>
</dbReference>
<dbReference type="Gene3D" id="1.10.3460.10">
    <property type="entry name" value="Chlorophyll a/b binding protein domain"/>
    <property type="match status" value="2"/>
</dbReference>
<dbReference type="InterPro" id="IPR022796">
    <property type="entry name" value="Chloroa_b-bind"/>
</dbReference>
<dbReference type="PANTHER" id="PTHR14154">
    <property type="entry name" value="UPF0041 BRAIN PROTEIN 44-RELATED"/>
    <property type="match status" value="1"/>
</dbReference>
<dbReference type="Pfam" id="PF00504">
    <property type="entry name" value="Chloroa_b-bind"/>
    <property type="match status" value="1"/>
</dbReference>
<dbReference type="SUPFAM" id="SSF103511">
    <property type="entry name" value="Chlorophyll a-b binding protein"/>
    <property type="match status" value="1"/>
</dbReference>
<organism>
    <name type="scientific">Solanum sogarandinum</name>
    <dbReference type="NCBI Taxonomy" id="52705"/>
    <lineage>
        <taxon>Eukaryota</taxon>
        <taxon>Viridiplantae</taxon>
        <taxon>Streptophyta</taxon>
        <taxon>Embryophyta</taxon>
        <taxon>Tracheophyta</taxon>
        <taxon>Spermatophyta</taxon>
        <taxon>Magnoliopsida</taxon>
        <taxon>eudicotyledons</taxon>
        <taxon>Gunneridae</taxon>
        <taxon>Pentapetalae</taxon>
        <taxon>asterids</taxon>
        <taxon>lamiids</taxon>
        <taxon>Solanales</taxon>
        <taxon>Solanaceae</taxon>
        <taxon>Solanoideae</taxon>
        <taxon>Solaneae</taxon>
        <taxon>Solanum</taxon>
    </lineage>
</organism>
<gene>
    <name type="primary">PSBS</name>
</gene>
<keyword id="KW-0150">Chloroplast</keyword>
<keyword id="KW-0472">Membrane</keyword>
<keyword id="KW-0602">Photosynthesis</keyword>
<keyword id="KW-0604">Photosystem II</keyword>
<keyword id="KW-0934">Plastid</keyword>
<keyword id="KW-0677">Repeat</keyword>
<keyword id="KW-0793">Thylakoid</keyword>
<keyword id="KW-0809">Transit peptide</keyword>
<keyword id="KW-0812">Transmembrane</keyword>
<keyword id="KW-1133">Transmembrane helix</keyword>
<name>PSBS_SOLSG</name>
<reference key="1">
    <citation type="journal article" date="2001" name="Physiol. Plantarum">
        <title>PSII-S gene expression, photosynthetic activity and abundance of plastid thioredoxin-related and lipid-associated proteins during chilling stress in Solanum species differing in freezing resistance.</title>
        <authorList>
            <person name="Rorat T."/>
            <person name="Havaux M."/>
            <person name="Irzykowski W."/>
            <person name="Cuine S."/>
            <person name="Becuwe N."/>
            <person name="Rey P."/>
        </authorList>
    </citation>
    <scope>NUCLEOTIDE SEQUENCE [MRNA]</scope>
    <source>
        <strain>Line 1</strain>
    </source>
</reference>
<accession>Q9FPP4</accession>
<sequence>MAQTMLLTANAKVDLRSKESLVERLKPKPLSSLFLPSLPLRFSSSTTNFSSSKFTSTTVALFKSKAKAPPKKVAPPKEKQKVEDGIFGTSGGIGFTKQNELFVGRVAMIGFAASLLGEAITGKGILAQLNLETGIPIYEAEPLLLFFILFNLLGAIGALGDRGRFIDDPAPATGLEKAVIPPGKSFKSALGLSEGGPLFGFTKANELFVGRLAQLGIAFSIIGEIITGKGALAQLNFETGVPINEIEPLLLFNIAFFFFAAINPGTGKFITDEEED</sequence>
<comment type="function">
    <text evidence="1">Seems to be involved in non-photochemical quenching, a process maintains the balance between dissipation and utilization of light energy to minimize generation of oxidizing molecules, thereby protecting the plant against photo-oxidative damage.</text>
</comment>
<comment type="subcellular location">
    <subcellularLocation>
        <location evidence="1">Plastid</location>
        <location evidence="1">Chloroplast thylakoid membrane</location>
        <topology evidence="1">Multi-pass membrane protein</topology>
    </subcellularLocation>
</comment>
<comment type="similarity">
    <text evidence="3">Belongs to the ELIP/psbS family.</text>
</comment>
<feature type="transit peptide" description="Chloroplast" evidence="2">
    <location>
        <begin position="1"/>
        <end position="67"/>
    </location>
</feature>
<feature type="chain" id="PRO_0000007807" description="Photosystem II 22 kDa protein, chloroplastic">
    <location>
        <begin position="68"/>
        <end position="276"/>
    </location>
</feature>
<feature type="transmembrane region" description="Helical" evidence="2">
    <location>
        <begin position="106"/>
        <end position="126"/>
    </location>
</feature>
<feature type="transmembrane region" description="Helical" evidence="2">
    <location>
        <begin position="140"/>
        <end position="160"/>
    </location>
</feature>
<feature type="transmembrane region" description="Helical" evidence="2">
    <location>
        <begin position="207"/>
        <end position="227"/>
    </location>
</feature>
<feature type="transmembrane region" description="Helical" evidence="2">
    <location>
        <begin position="242"/>
        <end position="262"/>
    </location>
</feature>
<feature type="repeat" description="1">
    <location>
        <begin position="62"/>
        <end position="168"/>
    </location>
</feature>
<feature type="repeat" description="2">
    <location>
        <begin position="169"/>
        <end position="276"/>
    </location>
</feature>
<proteinExistence type="evidence at transcript level"/>
<protein>
    <recommendedName>
        <fullName>Photosystem II 22 kDa protein, chloroplastic</fullName>
    </recommendedName>
    <alternativeName>
        <fullName>CP22</fullName>
    </alternativeName>
</protein>